<dbReference type="EC" id="7.2.2.20" evidence="1"/>
<dbReference type="EMBL" id="CP000514">
    <property type="protein sequence ID" value="ABM20845.1"/>
    <property type="molecule type" value="Genomic_DNA"/>
</dbReference>
<dbReference type="RefSeq" id="WP_011787179.1">
    <property type="nucleotide sequence ID" value="NC_008740.1"/>
</dbReference>
<dbReference type="SMR" id="A1U776"/>
<dbReference type="STRING" id="351348.Maqu_3776"/>
<dbReference type="KEGG" id="maq:Maqu_3776"/>
<dbReference type="eggNOG" id="COG1121">
    <property type="taxonomic scope" value="Bacteria"/>
</dbReference>
<dbReference type="HOGENOM" id="CLU_000604_1_11_6"/>
<dbReference type="OrthoDB" id="5866165at2"/>
<dbReference type="Proteomes" id="UP000000998">
    <property type="component" value="Chromosome"/>
</dbReference>
<dbReference type="GO" id="GO:0005886">
    <property type="term" value="C:plasma membrane"/>
    <property type="evidence" value="ECO:0007669"/>
    <property type="project" value="UniProtKB-SubCell"/>
</dbReference>
<dbReference type="GO" id="GO:0015633">
    <property type="term" value="F:ABC-type zinc transporter activity"/>
    <property type="evidence" value="ECO:0007669"/>
    <property type="project" value="UniProtKB-EC"/>
</dbReference>
<dbReference type="GO" id="GO:0005524">
    <property type="term" value="F:ATP binding"/>
    <property type="evidence" value="ECO:0007669"/>
    <property type="project" value="UniProtKB-KW"/>
</dbReference>
<dbReference type="GO" id="GO:0016887">
    <property type="term" value="F:ATP hydrolysis activity"/>
    <property type="evidence" value="ECO:0007669"/>
    <property type="project" value="InterPro"/>
</dbReference>
<dbReference type="GO" id="GO:0010043">
    <property type="term" value="P:response to zinc ion"/>
    <property type="evidence" value="ECO:0007669"/>
    <property type="project" value="TreeGrafter"/>
</dbReference>
<dbReference type="FunFam" id="3.40.50.300:FF:000392">
    <property type="entry name" value="Zinc import ATP-binding protein ZnuC"/>
    <property type="match status" value="1"/>
</dbReference>
<dbReference type="Gene3D" id="3.40.50.300">
    <property type="entry name" value="P-loop containing nucleotide triphosphate hydrolases"/>
    <property type="match status" value="1"/>
</dbReference>
<dbReference type="InterPro" id="IPR003593">
    <property type="entry name" value="AAA+_ATPase"/>
</dbReference>
<dbReference type="InterPro" id="IPR003439">
    <property type="entry name" value="ABC_transporter-like_ATP-bd"/>
</dbReference>
<dbReference type="InterPro" id="IPR017871">
    <property type="entry name" value="ABC_transporter-like_CS"/>
</dbReference>
<dbReference type="InterPro" id="IPR050153">
    <property type="entry name" value="Metal_Ion_Import_ABC"/>
</dbReference>
<dbReference type="InterPro" id="IPR027417">
    <property type="entry name" value="P-loop_NTPase"/>
</dbReference>
<dbReference type="NCBIfam" id="NF007090">
    <property type="entry name" value="PRK09544.1"/>
    <property type="match status" value="1"/>
</dbReference>
<dbReference type="PANTHER" id="PTHR42734">
    <property type="entry name" value="METAL TRANSPORT SYSTEM ATP-BINDING PROTEIN TM_0124-RELATED"/>
    <property type="match status" value="1"/>
</dbReference>
<dbReference type="PANTHER" id="PTHR42734:SF9">
    <property type="entry name" value="ZINC IMPORT ATP-BINDING PROTEIN ZNUC"/>
    <property type="match status" value="1"/>
</dbReference>
<dbReference type="Pfam" id="PF00005">
    <property type="entry name" value="ABC_tran"/>
    <property type="match status" value="1"/>
</dbReference>
<dbReference type="SMART" id="SM00382">
    <property type="entry name" value="AAA"/>
    <property type="match status" value="1"/>
</dbReference>
<dbReference type="SUPFAM" id="SSF52540">
    <property type="entry name" value="P-loop containing nucleoside triphosphate hydrolases"/>
    <property type="match status" value="1"/>
</dbReference>
<dbReference type="PROSITE" id="PS00211">
    <property type="entry name" value="ABC_TRANSPORTER_1"/>
    <property type="match status" value="1"/>
</dbReference>
<dbReference type="PROSITE" id="PS50893">
    <property type="entry name" value="ABC_TRANSPORTER_2"/>
    <property type="match status" value="1"/>
</dbReference>
<dbReference type="PROSITE" id="PS51298">
    <property type="entry name" value="ZNUC"/>
    <property type="match status" value="1"/>
</dbReference>
<comment type="function">
    <text evidence="1">Part of the ABC transporter complex ZnuABC involved in zinc import. Responsible for energy coupling to the transport system.</text>
</comment>
<comment type="catalytic activity">
    <reaction evidence="1">
        <text>Zn(2+)(out) + ATP(in) + H2O(in) = Zn(2+)(in) + ADP(in) + phosphate(in) + H(+)(in)</text>
        <dbReference type="Rhea" id="RHEA:29795"/>
        <dbReference type="ChEBI" id="CHEBI:15377"/>
        <dbReference type="ChEBI" id="CHEBI:15378"/>
        <dbReference type="ChEBI" id="CHEBI:29105"/>
        <dbReference type="ChEBI" id="CHEBI:30616"/>
        <dbReference type="ChEBI" id="CHEBI:43474"/>
        <dbReference type="ChEBI" id="CHEBI:456216"/>
        <dbReference type="EC" id="7.2.2.20"/>
    </reaction>
</comment>
<comment type="subunit">
    <text evidence="1">The complex is composed of two ATP-binding proteins (ZnuC), two transmembrane proteins (ZnuB) and a solute-binding protein (ZnuA).</text>
</comment>
<comment type="subcellular location">
    <subcellularLocation>
        <location evidence="1">Cell inner membrane</location>
        <topology evidence="1">Peripheral membrane protein</topology>
    </subcellularLocation>
</comment>
<comment type="similarity">
    <text evidence="1">Belongs to the ABC transporter superfamily. Zinc importer (TC 3.A.1.15.5) family.</text>
</comment>
<reference key="1">
    <citation type="journal article" date="2011" name="Appl. Environ. Microbiol.">
        <title>Genomic potential of Marinobacter aquaeolei, a biogeochemical 'opportunitroph'.</title>
        <authorList>
            <person name="Singer E."/>
            <person name="Webb E.A."/>
            <person name="Nelson W.C."/>
            <person name="Heidelberg J.F."/>
            <person name="Ivanova N."/>
            <person name="Pati A."/>
            <person name="Edwards K.J."/>
        </authorList>
    </citation>
    <scope>NUCLEOTIDE SEQUENCE [LARGE SCALE GENOMIC DNA]</scope>
    <source>
        <strain>ATCC 700491 / DSM 11845 / VT8</strain>
    </source>
</reference>
<evidence type="ECO:0000255" key="1">
    <source>
        <dbReference type="HAMAP-Rule" id="MF_01725"/>
    </source>
</evidence>
<organism>
    <name type="scientific">Marinobacter nauticus (strain ATCC 700491 / DSM 11845 / VT8)</name>
    <name type="common">Marinobacter aquaeolei</name>
    <dbReference type="NCBI Taxonomy" id="351348"/>
    <lineage>
        <taxon>Bacteria</taxon>
        <taxon>Pseudomonadati</taxon>
        <taxon>Pseudomonadota</taxon>
        <taxon>Gammaproteobacteria</taxon>
        <taxon>Pseudomonadales</taxon>
        <taxon>Marinobacteraceae</taxon>
        <taxon>Marinobacter</taxon>
    </lineage>
</organism>
<sequence>MTDPLVRLEQITVAFDDRPVVDRVNLTVSRGDIVTIIGPNGAGKTTLIKTVLGIQRATSGQLSVAPGLVIGYVPQHLTLEPTLPLSVRRFMLLSGRTLADCTAALERTGVAHLLDASVHHLSGGEKQRLLLARALARKPDLLVLDEPAQGVDINGQATLYDLIRQLRDELHCGIIMISHDLHLVMAATDRVICLNQHVCCSGYPEDISQDPAFVETFGHQVAESLAVYHHHHNHRHNLHGDVVSSADAHEGCSHDHH</sequence>
<protein>
    <recommendedName>
        <fullName evidence="1">Zinc import ATP-binding protein ZnuC</fullName>
        <ecNumber evidence="1">7.2.2.20</ecNumber>
    </recommendedName>
</protein>
<gene>
    <name evidence="1" type="primary">znuC</name>
    <name type="ordered locus">Maqu_3776</name>
</gene>
<keyword id="KW-0067">ATP-binding</keyword>
<keyword id="KW-0997">Cell inner membrane</keyword>
<keyword id="KW-1003">Cell membrane</keyword>
<keyword id="KW-0406">Ion transport</keyword>
<keyword id="KW-0472">Membrane</keyword>
<keyword id="KW-0547">Nucleotide-binding</keyword>
<keyword id="KW-1278">Translocase</keyword>
<keyword id="KW-0813">Transport</keyword>
<keyword id="KW-0862">Zinc</keyword>
<keyword id="KW-0864">Zinc transport</keyword>
<name>ZNUC_MARN8</name>
<accession>A1U776</accession>
<feature type="chain" id="PRO_0000281518" description="Zinc import ATP-binding protein ZnuC">
    <location>
        <begin position="1"/>
        <end position="257"/>
    </location>
</feature>
<feature type="domain" description="ABC transporter" evidence="1">
    <location>
        <begin position="6"/>
        <end position="221"/>
    </location>
</feature>
<feature type="binding site" evidence="1">
    <location>
        <begin position="38"/>
        <end position="45"/>
    </location>
    <ligand>
        <name>ATP</name>
        <dbReference type="ChEBI" id="CHEBI:30616"/>
    </ligand>
</feature>
<proteinExistence type="inferred from homology"/>